<dbReference type="EC" id="4.3.2.10"/>
<dbReference type="EC" id="3.5.1.2"/>
<dbReference type="EMBL" id="AF078135">
    <property type="protein sequence ID" value="AAD12948.1"/>
    <property type="molecule type" value="Genomic_DNA"/>
</dbReference>
<dbReference type="RefSeq" id="WP_011669952.1">
    <property type="nucleotide sequence ID" value="NZ_VCHK01000056.1"/>
</dbReference>
<dbReference type="SMR" id="Q9ZGM1"/>
<dbReference type="OMA" id="HEDKVPH"/>
<dbReference type="UniPathway" id="UPA00031">
    <property type="reaction ID" value="UER00010"/>
</dbReference>
<dbReference type="GO" id="GO:0005737">
    <property type="term" value="C:cytoplasm"/>
    <property type="evidence" value="ECO:0007669"/>
    <property type="project" value="UniProtKB-SubCell"/>
</dbReference>
<dbReference type="GO" id="GO:0004359">
    <property type="term" value="F:glutaminase activity"/>
    <property type="evidence" value="ECO:0007669"/>
    <property type="project" value="UniProtKB-EC"/>
</dbReference>
<dbReference type="GO" id="GO:0000107">
    <property type="term" value="F:imidazoleglycerol-phosphate synthase activity"/>
    <property type="evidence" value="ECO:0007669"/>
    <property type="project" value="UniProtKB-UniRule"/>
</dbReference>
<dbReference type="GO" id="GO:0016829">
    <property type="term" value="F:lyase activity"/>
    <property type="evidence" value="ECO:0007669"/>
    <property type="project" value="UniProtKB-KW"/>
</dbReference>
<dbReference type="GO" id="GO:0000105">
    <property type="term" value="P:L-histidine biosynthetic process"/>
    <property type="evidence" value="ECO:0007669"/>
    <property type="project" value="UniProtKB-UniRule"/>
</dbReference>
<dbReference type="CDD" id="cd01748">
    <property type="entry name" value="GATase1_IGP_Synthase"/>
    <property type="match status" value="1"/>
</dbReference>
<dbReference type="Gene3D" id="3.40.50.880">
    <property type="match status" value="1"/>
</dbReference>
<dbReference type="HAMAP" id="MF_00278">
    <property type="entry name" value="HisH"/>
    <property type="match status" value="1"/>
</dbReference>
<dbReference type="InterPro" id="IPR029062">
    <property type="entry name" value="Class_I_gatase-like"/>
</dbReference>
<dbReference type="InterPro" id="IPR017926">
    <property type="entry name" value="GATASE"/>
</dbReference>
<dbReference type="InterPro" id="IPR010139">
    <property type="entry name" value="Imidazole-glycPsynth_HisH"/>
</dbReference>
<dbReference type="NCBIfam" id="TIGR01855">
    <property type="entry name" value="IMP_synth_hisH"/>
    <property type="match status" value="1"/>
</dbReference>
<dbReference type="PANTHER" id="PTHR42701">
    <property type="entry name" value="IMIDAZOLE GLYCEROL PHOSPHATE SYNTHASE SUBUNIT HISH"/>
    <property type="match status" value="1"/>
</dbReference>
<dbReference type="PANTHER" id="PTHR42701:SF1">
    <property type="entry name" value="IMIDAZOLE GLYCEROL PHOSPHATE SYNTHASE SUBUNIT HISH"/>
    <property type="match status" value="1"/>
</dbReference>
<dbReference type="Pfam" id="PF00117">
    <property type="entry name" value="GATase"/>
    <property type="match status" value="1"/>
</dbReference>
<dbReference type="PIRSF" id="PIRSF000495">
    <property type="entry name" value="Amidotransf_hisH"/>
    <property type="match status" value="1"/>
</dbReference>
<dbReference type="SUPFAM" id="SSF52317">
    <property type="entry name" value="Class I glutamine amidotransferase-like"/>
    <property type="match status" value="1"/>
</dbReference>
<dbReference type="PROSITE" id="PS51273">
    <property type="entry name" value="GATASE_TYPE_1"/>
    <property type="match status" value="1"/>
</dbReference>
<keyword id="KW-0028">Amino-acid biosynthesis</keyword>
<keyword id="KW-0963">Cytoplasm</keyword>
<keyword id="KW-0315">Glutamine amidotransferase</keyword>
<keyword id="KW-0368">Histidine biosynthesis</keyword>
<keyword id="KW-0378">Hydrolase</keyword>
<keyword id="KW-0456">Lyase</keyword>
<gene>
    <name type="primary">hisH</name>
</gene>
<reference key="1">
    <citation type="journal article" date="1999" name="Microb. Pathog.">
        <title>Genetic organization of the lipopolysaccharide O-antigen biosynthetic locus of Leptospira borgpetersenii serovar Hardjobovis.</title>
        <authorList>
            <person name="Kalambaheti T."/>
            <person name="Bulach D.M."/>
            <person name="Rajakumar K."/>
            <person name="Adler B."/>
        </authorList>
    </citation>
    <scope>NUCLEOTIDE SEQUENCE [GENOMIC DNA]</scope>
    <source>
        <strain>L171 / Serovar Hardjobovis</strain>
    </source>
</reference>
<comment type="function">
    <text evidence="1">IGPS catalyzes the conversion of PRFAR and glutamine to IGP, AICAR and glutamate. The HisH subunit catalyzes the hydrolysis of glutamine to glutamate and ammonia as part of the synthesis of IGP and AICAR. The resulting ammonia molecule is channeled to the active site of HisF (By similarity).</text>
</comment>
<comment type="catalytic activity">
    <reaction>
        <text>5-[(5-phospho-1-deoxy-D-ribulos-1-ylimino)methylamino]-1-(5-phospho-beta-D-ribosyl)imidazole-4-carboxamide + L-glutamine = D-erythro-1-(imidazol-4-yl)glycerol 3-phosphate + 5-amino-1-(5-phospho-beta-D-ribosyl)imidazole-4-carboxamide + L-glutamate + H(+)</text>
        <dbReference type="Rhea" id="RHEA:24793"/>
        <dbReference type="ChEBI" id="CHEBI:15378"/>
        <dbReference type="ChEBI" id="CHEBI:29985"/>
        <dbReference type="ChEBI" id="CHEBI:58278"/>
        <dbReference type="ChEBI" id="CHEBI:58359"/>
        <dbReference type="ChEBI" id="CHEBI:58475"/>
        <dbReference type="ChEBI" id="CHEBI:58525"/>
        <dbReference type="EC" id="4.3.2.10"/>
    </reaction>
</comment>
<comment type="catalytic activity">
    <reaction>
        <text>L-glutamine + H2O = L-glutamate + NH4(+)</text>
        <dbReference type="Rhea" id="RHEA:15889"/>
        <dbReference type="ChEBI" id="CHEBI:15377"/>
        <dbReference type="ChEBI" id="CHEBI:28938"/>
        <dbReference type="ChEBI" id="CHEBI:29985"/>
        <dbReference type="ChEBI" id="CHEBI:58359"/>
        <dbReference type="EC" id="3.5.1.2"/>
    </reaction>
</comment>
<comment type="pathway">
    <text>Amino-acid biosynthesis; L-histidine biosynthesis; L-histidine from 5-phospho-alpha-D-ribose 1-diphosphate: step 5/9.</text>
</comment>
<comment type="subunit">
    <text evidence="1">Heterodimer of HisH and HisF.</text>
</comment>
<comment type="subcellular location">
    <subcellularLocation>
        <location evidence="1">Cytoplasm</location>
    </subcellularLocation>
</comment>
<protein>
    <recommendedName>
        <fullName>Imidazole glycerol phosphate synthase subunit HisH</fullName>
        <ecNumber>4.3.2.10</ecNumber>
    </recommendedName>
    <alternativeName>
        <fullName>IGP synthase glutaminase subunit</fullName>
        <ecNumber>3.5.1.2</ecNumber>
    </alternativeName>
    <alternativeName>
        <fullName>IGP synthase subunit HisH</fullName>
    </alternativeName>
    <alternativeName>
        <fullName>ImGP synthase subunit HisH</fullName>
        <shortName>IGPS subunit HisH</shortName>
    </alternativeName>
</protein>
<feature type="chain" id="PRO_0000152385" description="Imidazole glycerol phosphate synthase subunit HisH">
    <location>
        <begin position="1"/>
        <end position="204"/>
    </location>
</feature>
<feature type="domain" description="Glutamine amidotransferase type-1">
    <location>
        <begin position="1"/>
        <end position="204"/>
    </location>
</feature>
<feature type="active site" description="Nucleophile" evidence="1">
    <location>
        <position position="80"/>
    </location>
</feature>
<feature type="active site" evidence="1">
    <location>
        <position position="186"/>
    </location>
</feature>
<feature type="active site" evidence="1">
    <location>
        <position position="188"/>
    </location>
</feature>
<proteinExistence type="inferred from homology"/>
<accession>Q9ZGM1</accession>
<evidence type="ECO:0000250" key="1"/>
<sequence length="204" mass="22841">MIGILDYGVGNLKAFANVLKGLNFHHQIVKTEQELKGCEKIIMPGVGSFDSVMNKLIESGIRDVLSDLIINKKIPILGVCVGMQILASSSEEGSKSGLGWIRGRVKKFNFDRSDFSLTIPQIGWNEVNSTKENTLLKNLEKNPRFYFLHSYYIECEDKKDVIAIANYGGDFTCAVNRENIYGTQFHPEKSHHNGVALIRNFASL</sequence>
<organism>
    <name type="scientific">Leptospira borgpetersenii</name>
    <dbReference type="NCBI Taxonomy" id="174"/>
    <lineage>
        <taxon>Bacteria</taxon>
        <taxon>Pseudomonadati</taxon>
        <taxon>Spirochaetota</taxon>
        <taxon>Spirochaetia</taxon>
        <taxon>Leptospirales</taxon>
        <taxon>Leptospiraceae</taxon>
        <taxon>Leptospira</taxon>
    </lineage>
</organism>
<name>HIS5_LEPBO</name>